<organism>
    <name type="scientific">Homo sapiens</name>
    <name type="common">Human</name>
    <dbReference type="NCBI Taxonomy" id="9606"/>
    <lineage>
        <taxon>Eukaryota</taxon>
        <taxon>Metazoa</taxon>
        <taxon>Chordata</taxon>
        <taxon>Craniata</taxon>
        <taxon>Vertebrata</taxon>
        <taxon>Euteleostomi</taxon>
        <taxon>Mammalia</taxon>
        <taxon>Eutheria</taxon>
        <taxon>Euarchontoglires</taxon>
        <taxon>Primates</taxon>
        <taxon>Haplorrhini</taxon>
        <taxon>Catarrhini</taxon>
        <taxon>Hominidae</taxon>
        <taxon>Homo</taxon>
    </lineage>
</organism>
<reference key="1">
    <citation type="journal article" date="2004" name="Nat. Genet.">
        <title>Complete sequencing and characterization of 21,243 full-length human cDNAs.</title>
        <authorList>
            <person name="Ota T."/>
            <person name="Suzuki Y."/>
            <person name="Nishikawa T."/>
            <person name="Otsuki T."/>
            <person name="Sugiyama T."/>
            <person name="Irie R."/>
            <person name="Wakamatsu A."/>
            <person name="Hayashi K."/>
            <person name="Sato H."/>
            <person name="Nagai K."/>
            <person name="Kimura K."/>
            <person name="Makita H."/>
            <person name="Sekine M."/>
            <person name="Obayashi M."/>
            <person name="Nishi T."/>
            <person name="Shibahara T."/>
            <person name="Tanaka T."/>
            <person name="Ishii S."/>
            <person name="Yamamoto J."/>
            <person name="Saito K."/>
            <person name="Kawai Y."/>
            <person name="Isono Y."/>
            <person name="Nakamura Y."/>
            <person name="Nagahari K."/>
            <person name="Murakami K."/>
            <person name="Yasuda T."/>
            <person name="Iwayanagi T."/>
            <person name="Wagatsuma M."/>
            <person name="Shiratori A."/>
            <person name="Sudo H."/>
            <person name="Hosoiri T."/>
            <person name="Kaku Y."/>
            <person name="Kodaira H."/>
            <person name="Kondo H."/>
            <person name="Sugawara M."/>
            <person name="Takahashi M."/>
            <person name="Kanda K."/>
            <person name="Yokoi T."/>
            <person name="Furuya T."/>
            <person name="Kikkawa E."/>
            <person name="Omura Y."/>
            <person name="Abe K."/>
            <person name="Kamihara K."/>
            <person name="Katsuta N."/>
            <person name="Sato K."/>
            <person name="Tanikawa M."/>
            <person name="Yamazaki M."/>
            <person name="Ninomiya K."/>
            <person name="Ishibashi T."/>
            <person name="Yamashita H."/>
            <person name="Murakawa K."/>
            <person name="Fujimori K."/>
            <person name="Tanai H."/>
            <person name="Kimata M."/>
            <person name="Watanabe M."/>
            <person name="Hiraoka S."/>
            <person name="Chiba Y."/>
            <person name="Ishida S."/>
            <person name="Ono Y."/>
            <person name="Takiguchi S."/>
            <person name="Watanabe S."/>
            <person name="Yosida M."/>
            <person name="Hotuta T."/>
            <person name="Kusano J."/>
            <person name="Kanehori K."/>
            <person name="Takahashi-Fujii A."/>
            <person name="Hara H."/>
            <person name="Tanase T.-O."/>
            <person name="Nomura Y."/>
            <person name="Togiya S."/>
            <person name="Komai F."/>
            <person name="Hara R."/>
            <person name="Takeuchi K."/>
            <person name="Arita M."/>
            <person name="Imose N."/>
            <person name="Musashino K."/>
            <person name="Yuuki H."/>
            <person name="Oshima A."/>
            <person name="Sasaki N."/>
            <person name="Aotsuka S."/>
            <person name="Yoshikawa Y."/>
            <person name="Matsunawa H."/>
            <person name="Ichihara T."/>
            <person name="Shiohata N."/>
            <person name="Sano S."/>
            <person name="Moriya S."/>
            <person name="Momiyama H."/>
            <person name="Satoh N."/>
            <person name="Takami S."/>
            <person name="Terashima Y."/>
            <person name="Suzuki O."/>
            <person name="Nakagawa S."/>
            <person name="Senoh A."/>
            <person name="Mizoguchi H."/>
            <person name="Goto Y."/>
            <person name="Shimizu F."/>
            <person name="Wakebe H."/>
            <person name="Hishigaki H."/>
            <person name="Watanabe T."/>
            <person name="Sugiyama A."/>
            <person name="Takemoto M."/>
            <person name="Kawakami B."/>
            <person name="Yamazaki M."/>
            <person name="Watanabe K."/>
            <person name="Kumagai A."/>
            <person name="Itakura S."/>
            <person name="Fukuzumi Y."/>
            <person name="Fujimori Y."/>
            <person name="Komiyama M."/>
            <person name="Tashiro H."/>
            <person name="Tanigami A."/>
            <person name="Fujiwara T."/>
            <person name="Ono T."/>
            <person name="Yamada K."/>
            <person name="Fujii Y."/>
            <person name="Ozaki K."/>
            <person name="Hirao M."/>
            <person name="Ohmori Y."/>
            <person name="Kawabata A."/>
            <person name="Hikiji T."/>
            <person name="Kobatake N."/>
            <person name="Inagaki H."/>
            <person name="Ikema Y."/>
            <person name="Okamoto S."/>
            <person name="Okitani R."/>
            <person name="Kawakami T."/>
            <person name="Noguchi S."/>
            <person name="Itoh T."/>
            <person name="Shigeta K."/>
            <person name="Senba T."/>
            <person name="Matsumura K."/>
            <person name="Nakajima Y."/>
            <person name="Mizuno T."/>
            <person name="Morinaga M."/>
            <person name="Sasaki M."/>
            <person name="Togashi T."/>
            <person name="Oyama M."/>
            <person name="Hata H."/>
            <person name="Watanabe M."/>
            <person name="Komatsu T."/>
            <person name="Mizushima-Sugano J."/>
            <person name="Satoh T."/>
            <person name="Shirai Y."/>
            <person name="Takahashi Y."/>
            <person name="Nakagawa K."/>
            <person name="Okumura K."/>
            <person name="Nagase T."/>
            <person name="Nomura N."/>
            <person name="Kikuchi H."/>
            <person name="Masuho Y."/>
            <person name="Yamashita R."/>
            <person name="Nakai K."/>
            <person name="Yada T."/>
            <person name="Nakamura Y."/>
            <person name="Ohara O."/>
            <person name="Isogai T."/>
            <person name="Sugano S."/>
        </authorList>
    </citation>
    <scope>NUCLEOTIDE SEQUENCE [LARGE SCALE MRNA]</scope>
    <source>
        <tissue>Amygdala</tissue>
    </source>
</reference>
<reference key="2">
    <citation type="submission" date="2005-09" db="EMBL/GenBank/DDBJ databases">
        <authorList>
            <person name="Mural R.J."/>
            <person name="Istrail S."/>
            <person name="Sutton G.G."/>
            <person name="Florea L."/>
            <person name="Halpern A.L."/>
            <person name="Mobarry C.M."/>
            <person name="Lippert R."/>
            <person name="Walenz B."/>
            <person name="Shatkay H."/>
            <person name="Dew I."/>
            <person name="Miller J.R."/>
            <person name="Flanigan M.J."/>
            <person name="Edwards N.J."/>
            <person name="Bolanos R."/>
            <person name="Fasulo D."/>
            <person name="Halldorsson B.V."/>
            <person name="Hannenhalli S."/>
            <person name="Turner R."/>
            <person name="Yooseph S."/>
            <person name="Lu F."/>
            <person name="Nusskern D.R."/>
            <person name="Shue B.C."/>
            <person name="Zheng X.H."/>
            <person name="Zhong F."/>
            <person name="Delcher A.L."/>
            <person name="Huson D.H."/>
            <person name="Kravitz S.A."/>
            <person name="Mouchard L."/>
            <person name="Reinert K."/>
            <person name="Remington K.A."/>
            <person name="Clark A.G."/>
            <person name="Waterman M.S."/>
            <person name="Eichler E.E."/>
            <person name="Adams M.D."/>
            <person name="Hunkapiller M.W."/>
            <person name="Myers E.W."/>
            <person name="Venter J.C."/>
        </authorList>
    </citation>
    <scope>NUCLEOTIDE SEQUENCE [LARGE SCALE GENOMIC DNA]</scope>
</reference>
<protein>
    <recommendedName>
        <fullName>Putative uncharacterized protein encoded by LINC00269</fullName>
    </recommendedName>
</protein>
<sequence>MPKSLEIYKGSCNWEESGLLGSCFSQGLALLPRVEWSGAILAHCIVDLPSSSDPPTSASHFSGLQAHTTTARWSLTLLPRLECSGTISAHYNLRLLGSSNSPVSASQVAETTEACHHTRLIFVFSVETGFHHVGQAGLKLLTSGDPPASASQSAGITGVSHSARPKSCFLQLLG</sequence>
<evidence type="ECO:0000305" key="1"/>
<dbReference type="EMBL" id="AK090929">
    <property type="protein sequence ID" value="BAC03549.1"/>
    <property type="molecule type" value="mRNA"/>
</dbReference>
<dbReference type="EMBL" id="CH471132">
    <property type="protein sequence ID" value="EAX05366.1"/>
    <property type="molecule type" value="Genomic_DNA"/>
</dbReference>
<dbReference type="IntAct" id="Q8N2A0">
    <property type="interactions" value="1"/>
</dbReference>
<dbReference type="MINT" id="Q8N2A0"/>
<dbReference type="iPTMnet" id="Q8N2A0"/>
<dbReference type="BioMuta" id="HGNC:26586"/>
<dbReference type="PeptideAtlas" id="Q8N2A0"/>
<dbReference type="AGR" id="HGNC:26586"/>
<dbReference type="GeneCards" id="LINC00269"/>
<dbReference type="HGNC" id="HGNC:26586">
    <property type="gene designation" value="LINC00269"/>
</dbReference>
<dbReference type="neXtProt" id="NX_Q8N2A0"/>
<dbReference type="InParanoid" id="Q8N2A0"/>
<dbReference type="PAN-GO" id="Q8N2A0">
    <property type="GO annotations" value="0 GO annotations based on evolutionary models"/>
</dbReference>
<dbReference type="PhylomeDB" id="Q8N2A0"/>
<dbReference type="PathwayCommons" id="Q8N2A0"/>
<dbReference type="Pharos" id="Q8N2A0">
    <property type="development level" value="Tdark"/>
</dbReference>
<dbReference type="Proteomes" id="UP000005640">
    <property type="component" value="Unplaced"/>
</dbReference>
<dbReference type="RNAct" id="Q8N2A0">
    <property type="molecule type" value="protein"/>
</dbReference>
<dbReference type="PANTHER" id="PTHR12138:SF162">
    <property type="entry name" value="CHROMOSOME UNDETERMINED SCAFFOLD_275, WHOLE GENOME SHOTGUN SEQUENCE"/>
    <property type="match status" value="1"/>
</dbReference>
<dbReference type="PANTHER" id="PTHR12138">
    <property type="entry name" value="PRIMATE-EXPANDED PROTEIN FAMILY"/>
    <property type="match status" value="1"/>
</dbReference>
<dbReference type="PRINTS" id="PR02045">
    <property type="entry name" value="F138DOMAIN"/>
</dbReference>
<comment type="caution">
    <text evidence="1">Product of a dubious CDS prediction. Probable non-coding RNA.</text>
</comment>
<name>CX062_HUMAN</name>
<keyword id="KW-1185">Reference proteome</keyword>
<gene>
    <name type="primary">LINC00269</name>
    <name type="synonym">CXorf62</name>
    <name type="synonym">NCRNA00269</name>
</gene>
<proteinExistence type="uncertain"/>
<accession>Q8N2A0</accession>
<feature type="chain" id="PRO_0000318507" description="Putative uncharacterized protein encoded by LINC00269">
    <location>
        <begin position="1"/>
        <end position="174"/>
    </location>
</feature>